<feature type="chain" id="PRO_1000199967" description="Endoribonuclease YbeY">
    <location>
        <begin position="1"/>
        <end position="169"/>
    </location>
</feature>
<feature type="binding site" evidence="1">
    <location>
        <position position="128"/>
    </location>
    <ligand>
        <name>Zn(2+)</name>
        <dbReference type="ChEBI" id="CHEBI:29105"/>
        <note>catalytic</note>
    </ligand>
</feature>
<feature type="binding site" evidence="1">
    <location>
        <position position="132"/>
    </location>
    <ligand>
        <name>Zn(2+)</name>
        <dbReference type="ChEBI" id="CHEBI:29105"/>
        <note>catalytic</note>
    </ligand>
</feature>
<feature type="binding site" evidence="1">
    <location>
        <position position="138"/>
    </location>
    <ligand>
        <name>Zn(2+)</name>
        <dbReference type="ChEBI" id="CHEBI:29105"/>
        <note>catalytic</note>
    </ligand>
</feature>
<sequence>MQVDVDLQDAYSSSTAQVPIAAETWLTWFNRWFELLHPSLPPACSYELCLRLTDDGEIASLNSFYRQQPQPTDVLAFAALEVEVPRSPPDQTELLHLGDIVISVDTAQRQSLAGQHSLTVELAWLAAHGFLHLLGWDHPDPASLEQMLKQQSILLAAVGLENPALESFI</sequence>
<keyword id="KW-0963">Cytoplasm</keyword>
<keyword id="KW-0255">Endonuclease</keyword>
<keyword id="KW-0378">Hydrolase</keyword>
<keyword id="KW-0479">Metal-binding</keyword>
<keyword id="KW-0540">Nuclease</keyword>
<keyword id="KW-0690">Ribosome biogenesis</keyword>
<keyword id="KW-0698">rRNA processing</keyword>
<keyword id="KW-0862">Zinc</keyword>
<organism>
    <name type="scientific">Cyanothece sp. (strain PCC 7425 / ATCC 29141)</name>
    <dbReference type="NCBI Taxonomy" id="395961"/>
    <lineage>
        <taxon>Bacteria</taxon>
        <taxon>Bacillati</taxon>
        <taxon>Cyanobacteriota</taxon>
        <taxon>Cyanophyceae</taxon>
        <taxon>Gomontiellales</taxon>
        <taxon>Cyanothecaceae</taxon>
        <taxon>Cyanothece</taxon>
    </lineage>
</organism>
<proteinExistence type="inferred from homology"/>
<name>YBEY_CYAP4</name>
<protein>
    <recommendedName>
        <fullName evidence="1">Endoribonuclease YbeY</fullName>
        <ecNumber evidence="1">3.1.-.-</ecNumber>
    </recommendedName>
</protein>
<accession>B8HK54</accession>
<gene>
    <name evidence="1" type="primary">ybeY</name>
    <name type="ordered locus">Cyan7425_4494</name>
</gene>
<evidence type="ECO:0000255" key="1">
    <source>
        <dbReference type="HAMAP-Rule" id="MF_00009"/>
    </source>
</evidence>
<reference key="1">
    <citation type="journal article" date="2011" name="MBio">
        <title>Novel metabolic attributes of the genus Cyanothece, comprising a group of unicellular nitrogen-fixing Cyanobacteria.</title>
        <authorList>
            <person name="Bandyopadhyay A."/>
            <person name="Elvitigala T."/>
            <person name="Welsh E."/>
            <person name="Stockel J."/>
            <person name="Liberton M."/>
            <person name="Min H."/>
            <person name="Sherman L.A."/>
            <person name="Pakrasi H.B."/>
        </authorList>
    </citation>
    <scope>NUCLEOTIDE SEQUENCE [LARGE SCALE GENOMIC DNA]</scope>
    <source>
        <strain>PCC 7425 / ATCC 29141</strain>
    </source>
</reference>
<comment type="function">
    <text evidence="1">Single strand-specific metallo-endoribonuclease involved in late-stage 70S ribosome quality control and in maturation of the 3' terminus of the 16S rRNA.</text>
</comment>
<comment type="cofactor">
    <cofactor evidence="1">
        <name>Zn(2+)</name>
        <dbReference type="ChEBI" id="CHEBI:29105"/>
    </cofactor>
    <text evidence="1">Binds 1 zinc ion.</text>
</comment>
<comment type="subcellular location">
    <subcellularLocation>
        <location evidence="1">Cytoplasm</location>
    </subcellularLocation>
</comment>
<comment type="similarity">
    <text evidence="1">Belongs to the endoribonuclease YbeY family.</text>
</comment>
<dbReference type="EC" id="3.1.-.-" evidence="1"/>
<dbReference type="EMBL" id="CP001344">
    <property type="protein sequence ID" value="ACL46804.1"/>
    <property type="molecule type" value="Genomic_DNA"/>
</dbReference>
<dbReference type="SMR" id="B8HK54"/>
<dbReference type="STRING" id="395961.Cyan7425_4494"/>
<dbReference type="KEGG" id="cyn:Cyan7425_4494"/>
<dbReference type="eggNOG" id="COG0319">
    <property type="taxonomic scope" value="Bacteria"/>
</dbReference>
<dbReference type="HOGENOM" id="CLU_106710_3_0_3"/>
<dbReference type="OrthoDB" id="9807740at2"/>
<dbReference type="GO" id="GO:0005737">
    <property type="term" value="C:cytoplasm"/>
    <property type="evidence" value="ECO:0007669"/>
    <property type="project" value="UniProtKB-SubCell"/>
</dbReference>
<dbReference type="GO" id="GO:0004222">
    <property type="term" value="F:metalloendopeptidase activity"/>
    <property type="evidence" value="ECO:0007669"/>
    <property type="project" value="InterPro"/>
</dbReference>
<dbReference type="GO" id="GO:0004521">
    <property type="term" value="F:RNA endonuclease activity"/>
    <property type="evidence" value="ECO:0007669"/>
    <property type="project" value="UniProtKB-UniRule"/>
</dbReference>
<dbReference type="GO" id="GO:0008270">
    <property type="term" value="F:zinc ion binding"/>
    <property type="evidence" value="ECO:0007669"/>
    <property type="project" value="UniProtKB-UniRule"/>
</dbReference>
<dbReference type="GO" id="GO:0006364">
    <property type="term" value="P:rRNA processing"/>
    <property type="evidence" value="ECO:0007669"/>
    <property type="project" value="UniProtKB-UniRule"/>
</dbReference>
<dbReference type="Gene3D" id="3.40.390.30">
    <property type="entry name" value="Metalloproteases ('zincins'), catalytic domain"/>
    <property type="match status" value="1"/>
</dbReference>
<dbReference type="HAMAP" id="MF_00009">
    <property type="entry name" value="Endoribonucl_YbeY"/>
    <property type="match status" value="1"/>
</dbReference>
<dbReference type="InterPro" id="IPR023091">
    <property type="entry name" value="MetalPrtase_cat_dom_sf_prd"/>
</dbReference>
<dbReference type="InterPro" id="IPR002036">
    <property type="entry name" value="YbeY"/>
</dbReference>
<dbReference type="InterPro" id="IPR020549">
    <property type="entry name" value="YbeY_CS"/>
</dbReference>
<dbReference type="NCBIfam" id="TIGR00043">
    <property type="entry name" value="rRNA maturation RNase YbeY"/>
    <property type="match status" value="1"/>
</dbReference>
<dbReference type="PANTHER" id="PTHR46986">
    <property type="entry name" value="ENDORIBONUCLEASE YBEY, CHLOROPLASTIC"/>
    <property type="match status" value="1"/>
</dbReference>
<dbReference type="PANTHER" id="PTHR46986:SF1">
    <property type="entry name" value="ENDORIBONUCLEASE YBEY, CHLOROPLASTIC"/>
    <property type="match status" value="1"/>
</dbReference>
<dbReference type="Pfam" id="PF02130">
    <property type="entry name" value="YbeY"/>
    <property type="match status" value="1"/>
</dbReference>
<dbReference type="SUPFAM" id="SSF55486">
    <property type="entry name" value="Metalloproteases ('zincins'), catalytic domain"/>
    <property type="match status" value="1"/>
</dbReference>
<dbReference type="PROSITE" id="PS01306">
    <property type="entry name" value="UPF0054"/>
    <property type="match status" value="1"/>
</dbReference>